<protein>
    <recommendedName>
        <fullName>4-oxalocrotonate decarboxylase</fullName>
        <shortName>4-OD</shortName>
        <ecNumber>4.1.1.77</ecNumber>
    </recommendedName>
</protein>
<evidence type="ECO:0000305" key="1"/>
<sequence length="264" mass="28510">MNRTLNREQVLALAEHIENAELQAHDIHKVTNDYPEMTFADAYTIQWEIRRRKEERGNKIVGLKMGLTSWAKMAQMGVETPIYGFLADYFSVPDGGVVDCSKLIHPKIEAEIAVVTKAPLVGPGCHIGDVIAAVDYVIPTVEVIDSRYENFKFDLISVVADNASSTRYITGGRMANLEDVDLRTLGVVMEKNGEVVELGAGAAVLGHPLSSVAMLANLLAERGEHIPAGTFIMTGGITAAVAVAPGDNITVRYQGLGSVSARFV</sequence>
<name>XYLI_PSEPU</name>
<feature type="chain" id="PRO_0000066054" description="4-oxalocrotonate decarboxylase">
    <location>
        <begin position="1"/>
        <end position="264"/>
    </location>
</feature>
<gene>
    <name type="primary">xylI</name>
</gene>
<dbReference type="EC" id="4.1.1.77"/>
<dbReference type="EMBL" id="M94186">
    <property type="protein sequence ID" value="AAA25693.1"/>
    <property type="molecule type" value="Genomic_DNA"/>
</dbReference>
<dbReference type="PIR" id="S35224">
    <property type="entry name" value="S35224"/>
</dbReference>
<dbReference type="RefSeq" id="NP_542860.1">
    <property type="nucleotide sequence ID" value="NC_003350.1"/>
</dbReference>
<dbReference type="RefSeq" id="WP_011005903.1">
    <property type="nucleotide sequence ID" value="NC_003350.1"/>
</dbReference>
<dbReference type="SMR" id="P49155"/>
<dbReference type="BioCyc" id="MetaCyc:MONOMER-12752"/>
<dbReference type="UniPathway" id="UPA00273"/>
<dbReference type="GO" id="GO:0005737">
    <property type="term" value="C:cytoplasm"/>
    <property type="evidence" value="ECO:0007669"/>
    <property type="project" value="TreeGrafter"/>
</dbReference>
<dbReference type="GO" id="GO:0008684">
    <property type="term" value="F:2-oxopent-4-enoate hydratase activity"/>
    <property type="evidence" value="ECO:0007669"/>
    <property type="project" value="TreeGrafter"/>
</dbReference>
<dbReference type="GO" id="GO:0047437">
    <property type="term" value="F:4-oxalocrotonate decarboxylase activity"/>
    <property type="evidence" value="ECO:0007669"/>
    <property type="project" value="UniProtKB-EC"/>
</dbReference>
<dbReference type="GO" id="GO:0042203">
    <property type="term" value="P:toluene catabolic process"/>
    <property type="evidence" value="ECO:0007669"/>
    <property type="project" value="UniProtKB-UniPathway"/>
</dbReference>
<dbReference type="Gene3D" id="3.90.850.10">
    <property type="entry name" value="Fumarylacetoacetase-like, C-terminal domain"/>
    <property type="match status" value="1"/>
</dbReference>
<dbReference type="InterPro" id="IPR017630">
    <property type="entry name" value="4-oxalocrotonate_decarboxylase"/>
</dbReference>
<dbReference type="InterPro" id="IPR011234">
    <property type="entry name" value="Fumarylacetoacetase-like_C"/>
</dbReference>
<dbReference type="InterPro" id="IPR036663">
    <property type="entry name" value="Fumarylacetoacetase_C_sf"/>
</dbReference>
<dbReference type="InterPro" id="IPR050772">
    <property type="entry name" value="Hydratase-Decarb/MhpD_sf"/>
</dbReference>
<dbReference type="NCBIfam" id="TIGR03218">
    <property type="entry name" value="catechol_dmpH"/>
    <property type="match status" value="1"/>
</dbReference>
<dbReference type="PANTHER" id="PTHR30143:SF0">
    <property type="entry name" value="2-KETO-4-PENTENOATE HYDRATASE"/>
    <property type="match status" value="1"/>
</dbReference>
<dbReference type="PANTHER" id="PTHR30143">
    <property type="entry name" value="ACID HYDRATASE"/>
    <property type="match status" value="1"/>
</dbReference>
<dbReference type="Pfam" id="PF01557">
    <property type="entry name" value="FAA_hydrolase"/>
    <property type="match status" value="1"/>
</dbReference>
<dbReference type="SUPFAM" id="SSF56529">
    <property type="entry name" value="FAH"/>
    <property type="match status" value="1"/>
</dbReference>
<organism>
    <name type="scientific">Pseudomonas putida</name>
    <name type="common">Arthrobacter siderocapsulatus</name>
    <dbReference type="NCBI Taxonomy" id="303"/>
    <lineage>
        <taxon>Bacteria</taxon>
        <taxon>Pseudomonadati</taxon>
        <taxon>Pseudomonadota</taxon>
        <taxon>Gammaproteobacteria</taxon>
        <taxon>Pseudomonadales</taxon>
        <taxon>Pseudomonadaceae</taxon>
        <taxon>Pseudomonas</taxon>
    </lineage>
</organism>
<keyword id="KW-0058">Aromatic hydrocarbons catabolism</keyword>
<keyword id="KW-0456">Lyase</keyword>
<keyword id="KW-0614">Plasmid</keyword>
<proteinExistence type="inferred from homology"/>
<comment type="catalytic activity">
    <reaction>
        <text>(3E)-2-oxohex-3-enedioate + H(+) = 2-oxopent-4-enoate + CO2</text>
        <dbReference type="Rhea" id="RHEA:24260"/>
        <dbReference type="ChEBI" id="CHEBI:11641"/>
        <dbReference type="ChEBI" id="CHEBI:15378"/>
        <dbReference type="ChEBI" id="CHEBI:16526"/>
        <dbReference type="ChEBI" id="CHEBI:64908"/>
        <dbReference type="EC" id="4.1.1.77"/>
    </reaction>
</comment>
<comment type="pathway">
    <text>Xenobiotic degradation; toluene degradation.</text>
</comment>
<comment type="similarity">
    <text evidence="1">Belongs to the hydratase/decarboxylase family.</text>
</comment>
<geneLocation type="plasmid">
    <name>TOL pWW0</name>
</geneLocation>
<reference key="1">
    <citation type="journal article" date="1993" name="Mol. Gen. Genet.">
        <title>Comparison of the nucleotide sequences of the meta-cleavage pathway genes of TOL plasmid pWW0 from Pseudomonas putida with other meta-cleavage genes suggests that both single and multiple nucleotide substitutions contribute to enzyme evolution.</title>
        <authorList>
            <person name="Harayama S."/>
            <person name="Rekik M."/>
        </authorList>
    </citation>
    <scope>NUCLEOTIDE SEQUENCE [GENOMIC DNA]</scope>
    <source>
        <strain>ATCC 33015 / DSM 3931 / JCM 6156 / NCIMB 12182 / mt-2</strain>
    </source>
</reference>
<accession>P49155</accession>